<dbReference type="EMBL" id="CP000438">
    <property type="protein sequence ID" value="ABJ13510.1"/>
    <property type="molecule type" value="Genomic_DNA"/>
</dbReference>
<dbReference type="RefSeq" id="WP_003093678.1">
    <property type="nucleotide sequence ID" value="NZ_CP034244.1"/>
</dbReference>
<dbReference type="SMR" id="Q02T56"/>
<dbReference type="KEGG" id="pau:PA14_09100"/>
<dbReference type="PseudoCAP" id="PA14_09100"/>
<dbReference type="HOGENOM" id="CLU_092403_0_2_6"/>
<dbReference type="BioCyc" id="PAER208963:G1G74-760-MONOMER"/>
<dbReference type="Proteomes" id="UP000000653">
    <property type="component" value="Chromosome"/>
</dbReference>
<dbReference type="GO" id="GO:0015935">
    <property type="term" value="C:small ribosomal subunit"/>
    <property type="evidence" value="ECO:0007669"/>
    <property type="project" value="InterPro"/>
</dbReference>
<dbReference type="GO" id="GO:0019843">
    <property type="term" value="F:rRNA binding"/>
    <property type="evidence" value="ECO:0007669"/>
    <property type="project" value="UniProtKB-UniRule"/>
</dbReference>
<dbReference type="GO" id="GO:0003735">
    <property type="term" value="F:structural constituent of ribosome"/>
    <property type="evidence" value="ECO:0007669"/>
    <property type="project" value="InterPro"/>
</dbReference>
<dbReference type="GO" id="GO:0042274">
    <property type="term" value="P:ribosomal small subunit biogenesis"/>
    <property type="evidence" value="ECO:0007669"/>
    <property type="project" value="TreeGrafter"/>
</dbReference>
<dbReference type="GO" id="GO:0006412">
    <property type="term" value="P:translation"/>
    <property type="evidence" value="ECO:0007669"/>
    <property type="project" value="UniProtKB-UniRule"/>
</dbReference>
<dbReference type="CDD" id="cd00165">
    <property type="entry name" value="S4"/>
    <property type="match status" value="1"/>
</dbReference>
<dbReference type="FunFam" id="1.10.1050.10:FF:000001">
    <property type="entry name" value="30S ribosomal protein S4"/>
    <property type="match status" value="1"/>
</dbReference>
<dbReference type="FunFam" id="3.10.290.10:FF:000001">
    <property type="entry name" value="30S ribosomal protein S4"/>
    <property type="match status" value="1"/>
</dbReference>
<dbReference type="Gene3D" id="1.10.1050.10">
    <property type="entry name" value="Ribosomal Protein S4 Delta 41, Chain A, domain 1"/>
    <property type="match status" value="1"/>
</dbReference>
<dbReference type="Gene3D" id="3.10.290.10">
    <property type="entry name" value="RNA-binding S4 domain"/>
    <property type="match status" value="1"/>
</dbReference>
<dbReference type="HAMAP" id="MF_01306_B">
    <property type="entry name" value="Ribosomal_uS4_B"/>
    <property type="match status" value="1"/>
</dbReference>
<dbReference type="InterPro" id="IPR022801">
    <property type="entry name" value="Ribosomal_uS4"/>
</dbReference>
<dbReference type="InterPro" id="IPR005709">
    <property type="entry name" value="Ribosomal_uS4_bac-type"/>
</dbReference>
<dbReference type="InterPro" id="IPR018079">
    <property type="entry name" value="Ribosomal_uS4_CS"/>
</dbReference>
<dbReference type="InterPro" id="IPR001912">
    <property type="entry name" value="Ribosomal_uS4_N"/>
</dbReference>
<dbReference type="InterPro" id="IPR002942">
    <property type="entry name" value="S4_RNA-bd"/>
</dbReference>
<dbReference type="InterPro" id="IPR036986">
    <property type="entry name" value="S4_RNA-bd_sf"/>
</dbReference>
<dbReference type="NCBIfam" id="NF003717">
    <property type="entry name" value="PRK05327.1"/>
    <property type="match status" value="1"/>
</dbReference>
<dbReference type="NCBIfam" id="TIGR01017">
    <property type="entry name" value="rpsD_bact"/>
    <property type="match status" value="1"/>
</dbReference>
<dbReference type="PANTHER" id="PTHR11831">
    <property type="entry name" value="30S 40S RIBOSOMAL PROTEIN"/>
    <property type="match status" value="1"/>
</dbReference>
<dbReference type="PANTHER" id="PTHR11831:SF4">
    <property type="entry name" value="SMALL RIBOSOMAL SUBUNIT PROTEIN US4M"/>
    <property type="match status" value="1"/>
</dbReference>
<dbReference type="Pfam" id="PF00163">
    <property type="entry name" value="Ribosomal_S4"/>
    <property type="match status" value="1"/>
</dbReference>
<dbReference type="Pfam" id="PF01479">
    <property type="entry name" value="S4"/>
    <property type="match status" value="1"/>
</dbReference>
<dbReference type="SMART" id="SM01390">
    <property type="entry name" value="Ribosomal_S4"/>
    <property type="match status" value="1"/>
</dbReference>
<dbReference type="SMART" id="SM00363">
    <property type="entry name" value="S4"/>
    <property type="match status" value="1"/>
</dbReference>
<dbReference type="SUPFAM" id="SSF55174">
    <property type="entry name" value="Alpha-L RNA-binding motif"/>
    <property type="match status" value="1"/>
</dbReference>
<dbReference type="PROSITE" id="PS00632">
    <property type="entry name" value="RIBOSOMAL_S4"/>
    <property type="match status" value="1"/>
</dbReference>
<dbReference type="PROSITE" id="PS50889">
    <property type="entry name" value="S4"/>
    <property type="match status" value="1"/>
</dbReference>
<proteinExistence type="inferred from homology"/>
<sequence length="206" mass="23278">MARYIGPKCKLSRREGTDLFLKSGARALDSKCKAENVPGQHGQRRGRLSDYGLQLREKQKVRRIYGVLERQFRGYYQEASRRKGSTGENLLQLLECRLDNVVYRMGFGSTRSESRQLVSHKAITVNGQTVNIPSYQVKAGDVVAVREKSKNQLRIAQALELCGQRGRVEWVEVDLDKKAGTFKSAPARSDLSADINENLIVELYSK</sequence>
<keyword id="KW-0687">Ribonucleoprotein</keyword>
<keyword id="KW-0689">Ribosomal protein</keyword>
<keyword id="KW-0694">RNA-binding</keyword>
<keyword id="KW-0699">rRNA-binding</keyword>
<accession>Q02T56</accession>
<comment type="function">
    <text evidence="1">One of the primary rRNA binding proteins, it binds directly to 16S rRNA where it nucleates assembly of the body of the 30S subunit.</text>
</comment>
<comment type="function">
    <text evidence="1">With S5 and S12 plays an important role in translational accuracy.</text>
</comment>
<comment type="subunit">
    <text evidence="1">Part of the 30S ribosomal subunit. Contacts protein S5. The interaction surface between S4 and S5 is involved in control of translational fidelity.</text>
</comment>
<comment type="similarity">
    <text evidence="1">Belongs to the universal ribosomal protein uS4 family.</text>
</comment>
<protein>
    <recommendedName>
        <fullName evidence="1">Small ribosomal subunit protein uS4</fullName>
    </recommendedName>
    <alternativeName>
        <fullName evidence="2">30S ribosomal protein S4</fullName>
    </alternativeName>
</protein>
<name>RS4_PSEAB</name>
<reference key="1">
    <citation type="journal article" date="2006" name="Genome Biol.">
        <title>Genomic analysis reveals that Pseudomonas aeruginosa virulence is combinatorial.</title>
        <authorList>
            <person name="Lee D.G."/>
            <person name="Urbach J.M."/>
            <person name="Wu G."/>
            <person name="Liberati N.T."/>
            <person name="Feinbaum R.L."/>
            <person name="Miyata S."/>
            <person name="Diggins L.T."/>
            <person name="He J."/>
            <person name="Saucier M."/>
            <person name="Deziel E."/>
            <person name="Friedman L."/>
            <person name="Li L."/>
            <person name="Grills G."/>
            <person name="Montgomery K."/>
            <person name="Kucherlapati R."/>
            <person name="Rahme L.G."/>
            <person name="Ausubel F.M."/>
        </authorList>
    </citation>
    <scope>NUCLEOTIDE SEQUENCE [LARGE SCALE GENOMIC DNA]</scope>
    <source>
        <strain>UCBPP-PA14</strain>
    </source>
</reference>
<gene>
    <name evidence="1" type="primary">rpsD</name>
    <name type="ordered locus">PA14_09100</name>
</gene>
<feature type="chain" id="PRO_0000293341" description="Small ribosomal subunit protein uS4">
    <location>
        <begin position="1"/>
        <end position="206"/>
    </location>
</feature>
<feature type="domain" description="S4 RNA-binding" evidence="1">
    <location>
        <begin position="96"/>
        <end position="156"/>
    </location>
</feature>
<organism>
    <name type="scientific">Pseudomonas aeruginosa (strain UCBPP-PA14)</name>
    <dbReference type="NCBI Taxonomy" id="208963"/>
    <lineage>
        <taxon>Bacteria</taxon>
        <taxon>Pseudomonadati</taxon>
        <taxon>Pseudomonadota</taxon>
        <taxon>Gammaproteobacteria</taxon>
        <taxon>Pseudomonadales</taxon>
        <taxon>Pseudomonadaceae</taxon>
        <taxon>Pseudomonas</taxon>
    </lineage>
</organism>
<evidence type="ECO:0000255" key="1">
    <source>
        <dbReference type="HAMAP-Rule" id="MF_01306"/>
    </source>
</evidence>
<evidence type="ECO:0000305" key="2"/>